<proteinExistence type="predicted"/>
<sequence length="72" mass="8086">MKASLTCVGEYYNNVEQTELYLKAVASLRQTALYTSKPKDTDILLGKAFYKAGKLSEAGTVLNKYIYILSRE</sequence>
<protein>
    <recommendedName>
        <fullName>Uncharacterized protein RC0053</fullName>
    </recommendedName>
</protein>
<accession>Q92JL4</accession>
<gene>
    <name type="ordered locus">RC0053</name>
</gene>
<name>Y053_RICCN</name>
<feature type="chain" id="PRO_0000101443" description="Uncharacterized protein RC0053">
    <location>
        <begin position="1"/>
        <end position="72"/>
    </location>
</feature>
<reference key="1">
    <citation type="journal article" date="2001" name="Science">
        <title>Mechanisms of evolution in Rickettsia conorii and R. prowazekii.</title>
        <authorList>
            <person name="Ogata H."/>
            <person name="Audic S."/>
            <person name="Renesto-Audiffren P."/>
            <person name="Fournier P.-E."/>
            <person name="Barbe V."/>
            <person name="Samson D."/>
            <person name="Roux V."/>
            <person name="Cossart P."/>
            <person name="Weissenbach J."/>
            <person name="Claverie J.-M."/>
            <person name="Raoult D."/>
        </authorList>
    </citation>
    <scope>NUCLEOTIDE SEQUENCE [LARGE SCALE GENOMIC DNA]</scope>
    <source>
        <strain>ATCC VR-613 / Malish 7</strain>
    </source>
</reference>
<dbReference type="EMBL" id="AE006914">
    <property type="protein sequence ID" value="AAL02591.1"/>
    <property type="molecule type" value="Genomic_DNA"/>
</dbReference>
<dbReference type="PIR" id="E97706">
    <property type="entry name" value="E97706"/>
</dbReference>
<dbReference type="RefSeq" id="WP_010976739.1">
    <property type="nucleotide sequence ID" value="NC_003103.1"/>
</dbReference>
<dbReference type="SMR" id="Q92JL4"/>
<dbReference type="GeneID" id="928606"/>
<dbReference type="KEGG" id="rco:RC0053"/>
<dbReference type="PATRIC" id="fig|272944.4.peg.64"/>
<dbReference type="HOGENOM" id="CLU_2635776_0_0_5"/>
<dbReference type="Proteomes" id="UP000000816">
    <property type="component" value="Chromosome"/>
</dbReference>
<organism>
    <name type="scientific">Rickettsia conorii (strain ATCC VR-613 / Malish 7)</name>
    <dbReference type="NCBI Taxonomy" id="272944"/>
    <lineage>
        <taxon>Bacteria</taxon>
        <taxon>Pseudomonadati</taxon>
        <taxon>Pseudomonadota</taxon>
        <taxon>Alphaproteobacteria</taxon>
        <taxon>Rickettsiales</taxon>
        <taxon>Rickettsiaceae</taxon>
        <taxon>Rickettsieae</taxon>
        <taxon>Rickettsia</taxon>
        <taxon>spotted fever group</taxon>
    </lineage>
</organism>